<dbReference type="EMBL" id="CP000114">
    <property type="protein sequence ID" value="ABA45553.1"/>
    <property type="molecule type" value="Genomic_DNA"/>
</dbReference>
<dbReference type="RefSeq" id="WP_000024418.1">
    <property type="nucleotide sequence ID" value="NC_007432.1"/>
</dbReference>
<dbReference type="SMR" id="Q3K3W8"/>
<dbReference type="GeneID" id="66885019"/>
<dbReference type="KEGG" id="sak:SAK_0092"/>
<dbReference type="HOGENOM" id="CLU_041575_5_2_9"/>
<dbReference type="GO" id="GO:1990904">
    <property type="term" value="C:ribonucleoprotein complex"/>
    <property type="evidence" value="ECO:0007669"/>
    <property type="project" value="UniProtKB-KW"/>
</dbReference>
<dbReference type="GO" id="GO:0005840">
    <property type="term" value="C:ribosome"/>
    <property type="evidence" value="ECO:0007669"/>
    <property type="project" value="UniProtKB-KW"/>
</dbReference>
<dbReference type="GO" id="GO:0019843">
    <property type="term" value="F:rRNA binding"/>
    <property type="evidence" value="ECO:0007669"/>
    <property type="project" value="UniProtKB-UniRule"/>
</dbReference>
<dbReference type="GO" id="GO:0003735">
    <property type="term" value="F:structural constituent of ribosome"/>
    <property type="evidence" value="ECO:0007669"/>
    <property type="project" value="InterPro"/>
</dbReference>
<dbReference type="GO" id="GO:0006412">
    <property type="term" value="P:translation"/>
    <property type="evidence" value="ECO:0007669"/>
    <property type="project" value="UniProtKB-UniRule"/>
</dbReference>
<dbReference type="FunFam" id="3.40.1370.10:FF:000003">
    <property type="entry name" value="50S ribosomal protein L4"/>
    <property type="match status" value="1"/>
</dbReference>
<dbReference type="Gene3D" id="3.40.1370.10">
    <property type="match status" value="1"/>
</dbReference>
<dbReference type="HAMAP" id="MF_01328_B">
    <property type="entry name" value="Ribosomal_uL4_B"/>
    <property type="match status" value="1"/>
</dbReference>
<dbReference type="InterPro" id="IPR002136">
    <property type="entry name" value="Ribosomal_uL4"/>
</dbReference>
<dbReference type="InterPro" id="IPR013005">
    <property type="entry name" value="Ribosomal_uL4-like"/>
</dbReference>
<dbReference type="InterPro" id="IPR023574">
    <property type="entry name" value="Ribosomal_uL4_dom_sf"/>
</dbReference>
<dbReference type="NCBIfam" id="TIGR03953">
    <property type="entry name" value="rplD_bact"/>
    <property type="match status" value="1"/>
</dbReference>
<dbReference type="PANTHER" id="PTHR10746">
    <property type="entry name" value="50S RIBOSOMAL PROTEIN L4"/>
    <property type="match status" value="1"/>
</dbReference>
<dbReference type="PANTHER" id="PTHR10746:SF6">
    <property type="entry name" value="LARGE RIBOSOMAL SUBUNIT PROTEIN UL4M"/>
    <property type="match status" value="1"/>
</dbReference>
<dbReference type="Pfam" id="PF00573">
    <property type="entry name" value="Ribosomal_L4"/>
    <property type="match status" value="1"/>
</dbReference>
<dbReference type="SUPFAM" id="SSF52166">
    <property type="entry name" value="Ribosomal protein L4"/>
    <property type="match status" value="1"/>
</dbReference>
<name>RL4_STRA1</name>
<gene>
    <name evidence="1" type="primary">rplD</name>
    <name type="ordered locus">SAK_0092</name>
</gene>
<comment type="function">
    <text evidence="1">One of the primary rRNA binding proteins, this protein initially binds near the 5'-end of the 23S rRNA. It is important during the early stages of 50S assembly. It makes multiple contacts with different domains of the 23S rRNA in the assembled 50S subunit and ribosome.</text>
</comment>
<comment type="function">
    <text evidence="1">Forms part of the polypeptide exit tunnel.</text>
</comment>
<comment type="subunit">
    <text evidence="1">Part of the 50S ribosomal subunit.</text>
</comment>
<comment type="similarity">
    <text evidence="1">Belongs to the universal ribosomal protein uL4 family.</text>
</comment>
<accession>Q3K3W8</accession>
<organism>
    <name type="scientific">Streptococcus agalactiae serotype Ia (strain ATCC 27591 / A909 / CDC SS700)</name>
    <dbReference type="NCBI Taxonomy" id="205921"/>
    <lineage>
        <taxon>Bacteria</taxon>
        <taxon>Bacillati</taxon>
        <taxon>Bacillota</taxon>
        <taxon>Bacilli</taxon>
        <taxon>Lactobacillales</taxon>
        <taxon>Streptococcaceae</taxon>
        <taxon>Streptococcus</taxon>
    </lineage>
</organism>
<feature type="chain" id="PRO_0000242443" description="Large ribosomal subunit protein uL4">
    <location>
        <begin position="1"/>
        <end position="207"/>
    </location>
</feature>
<feature type="region of interest" description="Disordered" evidence="2">
    <location>
        <begin position="49"/>
        <end position="78"/>
    </location>
</feature>
<protein>
    <recommendedName>
        <fullName evidence="1">Large ribosomal subunit protein uL4</fullName>
    </recommendedName>
    <alternativeName>
        <fullName evidence="3">50S ribosomal protein L4</fullName>
    </alternativeName>
</protein>
<sequence length="207" mass="22113">MANVKLFDQTGKEVSSVELNEAIFGIEPNESVVFDVVISQRASLRQGTHAVKNRSAVSGGGRKPWRQKGTGRARQGSIRSPQWRGGGVVFGPTPRSYGYKLPQKVRRLALKSVYSAKVAEDKFVAVENLSFAAPKTAEFASVLSALSIDSKVLVILEEGNEFAALSARNLPNVTVATATTASVLDIVNADKLLVTKEAISTIEGVLA</sequence>
<evidence type="ECO:0000255" key="1">
    <source>
        <dbReference type="HAMAP-Rule" id="MF_01328"/>
    </source>
</evidence>
<evidence type="ECO:0000256" key="2">
    <source>
        <dbReference type="SAM" id="MobiDB-lite"/>
    </source>
</evidence>
<evidence type="ECO:0000305" key="3"/>
<keyword id="KW-0687">Ribonucleoprotein</keyword>
<keyword id="KW-0689">Ribosomal protein</keyword>
<keyword id="KW-0694">RNA-binding</keyword>
<keyword id="KW-0699">rRNA-binding</keyword>
<proteinExistence type="inferred from homology"/>
<reference key="1">
    <citation type="journal article" date="2005" name="Proc. Natl. Acad. Sci. U.S.A.">
        <title>Genome analysis of multiple pathogenic isolates of Streptococcus agalactiae: implications for the microbial 'pan-genome'.</title>
        <authorList>
            <person name="Tettelin H."/>
            <person name="Masignani V."/>
            <person name="Cieslewicz M.J."/>
            <person name="Donati C."/>
            <person name="Medini D."/>
            <person name="Ward N.L."/>
            <person name="Angiuoli S.V."/>
            <person name="Crabtree J."/>
            <person name="Jones A.L."/>
            <person name="Durkin A.S."/>
            <person name="DeBoy R.T."/>
            <person name="Davidsen T.M."/>
            <person name="Mora M."/>
            <person name="Scarselli M."/>
            <person name="Margarit y Ros I."/>
            <person name="Peterson J.D."/>
            <person name="Hauser C.R."/>
            <person name="Sundaram J.P."/>
            <person name="Nelson W.C."/>
            <person name="Madupu R."/>
            <person name="Brinkac L.M."/>
            <person name="Dodson R.J."/>
            <person name="Rosovitz M.J."/>
            <person name="Sullivan S.A."/>
            <person name="Daugherty S.C."/>
            <person name="Haft D.H."/>
            <person name="Selengut J."/>
            <person name="Gwinn M.L."/>
            <person name="Zhou L."/>
            <person name="Zafar N."/>
            <person name="Khouri H."/>
            <person name="Radune D."/>
            <person name="Dimitrov G."/>
            <person name="Watkins K."/>
            <person name="O'Connor K.J."/>
            <person name="Smith S."/>
            <person name="Utterback T.R."/>
            <person name="White O."/>
            <person name="Rubens C.E."/>
            <person name="Grandi G."/>
            <person name="Madoff L.C."/>
            <person name="Kasper D.L."/>
            <person name="Telford J.L."/>
            <person name="Wessels M.R."/>
            <person name="Rappuoli R."/>
            <person name="Fraser C.M."/>
        </authorList>
    </citation>
    <scope>NUCLEOTIDE SEQUENCE [LARGE SCALE GENOMIC DNA]</scope>
    <source>
        <strain>ATCC 27591 / A909 / CDC SS700</strain>
    </source>
</reference>